<dbReference type="EC" id="4.3.3.7" evidence="1"/>
<dbReference type="EMBL" id="AM743169">
    <property type="protein sequence ID" value="CAQ45294.1"/>
    <property type="molecule type" value="Genomic_DNA"/>
</dbReference>
<dbReference type="RefSeq" id="WP_012479759.1">
    <property type="nucleotide sequence ID" value="NC_010943.1"/>
</dbReference>
<dbReference type="SMR" id="B2FL61"/>
<dbReference type="EnsemblBacteria" id="CAQ45294">
    <property type="protein sequence ID" value="CAQ45294"/>
    <property type="gene ID" value="Smlt1773"/>
</dbReference>
<dbReference type="KEGG" id="sml:Smlt1773"/>
<dbReference type="PATRIC" id="fig|522373.3.peg.1694"/>
<dbReference type="eggNOG" id="COG0329">
    <property type="taxonomic scope" value="Bacteria"/>
</dbReference>
<dbReference type="HOGENOM" id="CLU_049343_7_1_6"/>
<dbReference type="UniPathway" id="UPA00034">
    <property type="reaction ID" value="UER00017"/>
</dbReference>
<dbReference type="Proteomes" id="UP000008840">
    <property type="component" value="Chromosome"/>
</dbReference>
<dbReference type="GO" id="GO:0005829">
    <property type="term" value="C:cytosol"/>
    <property type="evidence" value="ECO:0007669"/>
    <property type="project" value="TreeGrafter"/>
</dbReference>
<dbReference type="GO" id="GO:0008840">
    <property type="term" value="F:4-hydroxy-tetrahydrodipicolinate synthase activity"/>
    <property type="evidence" value="ECO:0007669"/>
    <property type="project" value="UniProtKB-UniRule"/>
</dbReference>
<dbReference type="GO" id="GO:0019877">
    <property type="term" value="P:diaminopimelate biosynthetic process"/>
    <property type="evidence" value="ECO:0007669"/>
    <property type="project" value="UniProtKB-UniRule"/>
</dbReference>
<dbReference type="GO" id="GO:0009089">
    <property type="term" value="P:lysine biosynthetic process via diaminopimelate"/>
    <property type="evidence" value="ECO:0007669"/>
    <property type="project" value="UniProtKB-UniRule"/>
</dbReference>
<dbReference type="CDD" id="cd00950">
    <property type="entry name" value="DHDPS"/>
    <property type="match status" value="1"/>
</dbReference>
<dbReference type="Gene3D" id="3.20.20.70">
    <property type="entry name" value="Aldolase class I"/>
    <property type="match status" value="1"/>
</dbReference>
<dbReference type="HAMAP" id="MF_00418">
    <property type="entry name" value="DapA"/>
    <property type="match status" value="1"/>
</dbReference>
<dbReference type="InterPro" id="IPR013785">
    <property type="entry name" value="Aldolase_TIM"/>
</dbReference>
<dbReference type="InterPro" id="IPR005263">
    <property type="entry name" value="DapA"/>
</dbReference>
<dbReference type="InterPro" id="IPR002220">
    <property type="entry name" value="DapA-like"/>
</dbReference>
<dbReference type="InterPro" id="IPR020625">
    <property type="entry name" value="Schiff_base-form_aldolases_AS"/>
</dbReference>
<dbReference type="InterPro" id="IPR020624">
    <property type="entry name" value="Schiff_base-form_aldolases_CS"/>
</dbReference>
<dbReference type="NCBIfam" id="TIGR00674">
    <property type="entry name" value="dapA"/>
    <property type="match status" value="1"/>
</dbReference>
<dbReference type="PANTHER" id="PTHR12128:SF66">
    <property type="entry name" value="4-HYDROXY-2-OXOGLUTARATE ALDOLASE, MITOCHONDRIAL"/>
    <property type="match status" value="1"/>
</dbReference>
<dbReference type="PANTHER" id="PTHR12128">
    <property type="entry name" value="DIHYDRODIPICOLINATE SYNTHASE"/>
    <property type="match status" value="1"/>
</dbReference>
<dbReference type="Pfam" id="PF00701">
    <property type="entry name" value="DHDPS"/>
    <property type="match status" value="1"/>
</dbReference>
<dbReference type="PIRSF" id="PIRSF001365">
    <property type="entry name" value="DHDPS"/>
    <property type="match status" value="1"/>
</dbReference>
<dbReference type="PRINTS" id="PR00146">
    <property type="entry name" value="DHPICSNTHASE"/>
</dbReference>
<dbReference type="SMART" id="SM01130">
    <property type="entry name" value="DHDPS"/>
    <property type="match status" value="1"/>
</dbReference>
<dbReference type="SUPFAM" id="SSF51569">
    <property type="entry name" value="Aldolase"/>
    <property type="match status" value="1"/>
</dbReference>
<dbReference type="PROSITE" id="PS00665">
    <property type="entry name" value="DHDPS_1"/>
    <property type="match status" value="1"/>
</dbReference>
<dbReference type="PROSITE" id="PS00666">
    <property type="entry name" value="DHDPS_2"/>
    <property type="match status" value="1"/>
</dbReference>
<keyword id="KW-0028">Amino-acid biosynthesis</keyword>
<keyword id="KW-0963">Cytoplasm</keyword>
<keyword id="KW-0220">Diaminopimelate biosynthesis</keyword>
<keyword id="KW-0456">Lyase</keyword>
<keyword id="KW-0457">Lysine biosynthesis</keyword>
<keyword id="KW-1185">Reference proteome</keyword>
<keyword id="KW-0704">Schiff base</keyword>
<name>DAPA_STRMK</name>
<proteinExistence type="inferred from homology"/>
<sequence>MSLSGLITALATPFRADGALDPDGWQRLLHLQLEGGVHGVVVAGSTGEAATLTDAEYDLLLASAVERIGGRIPVMAGTGLSGTAKTIEQTRRAAALGASHALVVTPPYVRPTQAGLIAHYRAVADQGGLPVVLYNVPGRTGCDMQPETVAELASHPNIVGIKEAVGDTGRVQALLALRSPQFAVLSGDDGTAARSIRAGIDGLISVGSNVLPGAYRRMCELAAAHDHEATESWDARLQPFHDFCGVEPNPIPVKALLRRIGIGHDLRLPLLPLSASHHAAADHLAGDIAALEALSSH</sequence>
<gene>
    <name evidence="1" type="primary">dapA</name>
    <name type="ordered locus">Smlt1773</name>
</gene>
<comment type="function">
    <text evidence="1">Catalyzes the condensation of (S)-aspartate-beta-semialdehyde [(S)-ASA] and pyruvate to 4-hydroxy-tetrahydrodipicolinate (HTPA).</text>
</comment>
<comment type="catalytic activity">
    <reaction evidence="1">
        <text>L-aspartate 4-semialdehyde + pyruvate = (2S,4S)-4-hydroxy-2,3,4,5-tetrahydrodipicolinate + H2O + H(+)</text>
        <dbReference type="Rhea" id="RHEA:34171"/>
        <dbReference type="ChEBI" id="CHEBI:15361"/>
        <dbReference type="ChEBI" id="CHEBI:15377"/>
        <dbReference type="ChEBI" id="CHEBI:15378"/>
        <dbReference type="ChEBI" id="CHEBI:67139"/>
        <dbReference type="ChEBI" id="CHEBI:537519"/>
        <dbReference type="EC" id="4.3.3.7"/>
    </reaction>
</comment>
<comment type="pathway">
    <text evidence="1">Amino-acid biosynthesis; L-lysine biosynthesis via DAP pathway; (S)-tetrahydrodipicolinate from L-aspartate: step 3/4.</text>
</comment>
<comment type="subunit">
    <text evidence="1">Homotetramer; dimer of dimers.</text>
</comment>
<comment type="subcellular location">
    <subcellularLocation>
        <location evidence="1">Cytoplasm</location>
    </subcellularLocation>
</comment>
<comment type="similarity">
    <text evidence="1">Belongs to the DapA family.</text>
</comment>
<comment type="caution">
    <text evidence="2">Was originally thought to be a dihydrodipicolinate synthase (DHDPS), catalyzing the condensation of (S)-aspartate-beta-semialdehyde [(S)-ASA] and pyruvate to dihydrodipicolinate (DHDP). However, it was shown in E.coli that the product of the enzymatic reaction is not dihydrodipicolinate but in fact (4S)-4-hydroxy-2,3,4,5-tetrahydro-(2S)-dipicolinic acid (HTPA), and that the consecutive dehydration reaction leading to DHDP is not spontaneous but catalyzed by DapB.</text>
</comment>
<evidence type="ECO:0000255" key="1">
    <source>
        <dbReference type="HAMAP-Rule" id="MF_00418"/>
    </source>
</evidence>
<evidence type="ECO:0000305" key="2"/>
<organism>
    <name type="scientific">Stenotrophomonas maltophilia (strain K279a)</name>
    <dbReference type="NCBI Taxonomy" id="522373"/>
    <lineage>
        <taxon>Bacteria</taxon>
        <taxon>Pseudomonadati</taxon>
        <taxon>Pseudomonadota</taxon>
        <taxon>Gammaproteobacteria</taxon>
        <taxon>Lysobacterales</taxon>
        <taxon>Lysobacteraceae</taxon>
        <taxon>Stenotrophomonas</taxon>
        <taxon>Stenotrophomonas maltophilia group</taxon>
    </lineage>
</organism>
<protein>
    <recommendedName>
        <fullName evidence="1">4-hydroxy-tetrahydrodipicolinate synthase</fullName>
        <shortName evidence="1">HTPA synthase</shortName>
        <ecNumber evidence="1">4.3.3.7</ecNumber>
    </recommendedName>
</protein>
<reference key="1">
    <citation type="journal article" date="2008" name="Genome Biol.">
        <title>The complete genome, comparative and functional analysis of Stenotrophomonas maltophilia reveals an organism heavily shielded by drug resistance determinants.</title>
        <authorList>
            <person name="Crossman L.C."/>
            <person name="Gould V.C."/>
            <person name="Dow J.M."/>
            <person name="Vernikos G.S."/>
            <person name="Okazaki A."/>
            <person name="Sebaihia M."/>
            <person name="Saunders D."/>
            <person name="Arrowsmith C."/>
            <person name="Carver T."/>
            <person name="Peters N."/>
            <person name="Adlem E."/>
            <person name="Kerhornou A."/>
            <person name="Lord A."/>
            <person name="Murphy L."/>
            <person name="Seeger K."/>
            <person name="Squares R."/>
            <person name="Rutter S."/>
            <person name="Quail M.A."/>
            <person name="Rajandream M.A."/>
            <person name="Harris D."/>
            <person name="Churcher C."/>
            <person name="Bentley S.D."/>
            <person name="Parkhill J."/>
            <person name="Thomson N.R."/>
            <person name="Avison M.B."/>
        </authorList>
    </citation>
    <scope>NUCLEOTIDE SEQUENCE [LARGE SCALE GENOMIC DNA]</scope>
    <source>
        <strain>K279a</strain>
    </source>
</reference>
<feature type="chain" id="PRO_1000124067" description="4-hydroxy-tetrahydrodipicolinate synthase">
    <location>
        <begin position="1"/>
        <end position="297"/>
    </location>
</feature>
<feature type="active site" description="Proton donor/acceptor" evidence="1">
    <location>
        <position position="134"/>
    </location>
</feature>
<feature type="active site" description="Schiff-base intermediate with substrate" evidence="1">
    <location>
        <position position="162"/>
    </location>
</feature>
<feature type="binding site" evidence="1">
    <location>
        <position position="46"/>
    </location>
    <ligand>
        <name>pyruvate</name>
        <dbReference type="ChEBI" id="CHEBI:15361"/>
    </ligand>
</feature>
<feature type="binding site" evidence="1">
    <location>
        <position position="204"/>
    </location>
    <ligand>
        <name>pyruvate</name>
        <dbReference type="ChEBI" id="CHEBI:15361"/>
    </ligand>
</feature>
<feature type="site" description="Part of a proton relay during catalysis" evidence="1">
    <location>
        <position position="45"/>
    </location>
</feature>
<feature type="site" description="Part of a proton relay during catalysis" evidence="1">
    <location>
        <position position="108"/>
    </location>
</feature>
<accession>B2FL61</accession>